<comment type="function">
    <text evidence="1">Isomerase that catalyzes the conversion of deoxy-ribose 1-phosphate (dRib-1-P) and ribose 1-phosphate (Rib-1-P) to deoxy-ribose 5-phosphate (dRib-5-P) and ribose 5-phosphate (Rib-5-P), respectively.</text>
</comment>
<comment type="catalytic activity">
    <reaction evidence="1">
        <text>2-deoxy-alpha-D-ribose 1-phosphate = 2-deoxy-D-ribose 5-phosphate</text>
        <dbReference type="Rhea" id="RHEA:27658"/>
        <dbReference type="ChEBI" id="CHEBI:57259"/>
        <dbReference type="ChEBI" id="CHEBI:62877"/>
        <dbReference type="EC" id="5.4.2.7"/>
    </reaction>
</comment>
<comment type="catalytic activity">
    <reaction evidence="1">
        <text>alpha-D-ribose 1-phosphate = D-ribose 5-phosphate</text>
        <dbReference type="Rhea" id="RHEA:18793"/>
        <dbReference type="ChEBI" id="CHEBI:57720"/>
        <dbReference type="ChEBI" id="CHEBI:78346"/>
        <dbReference type="EC" id="5.4.2.7"/>
    </reaction>
</comment>
<comment type="cofactor">
    <cofactor evidence="1">
        <name>Mn(2+)</name>
        <dbReference type="ChEBI" id="CHEBI:29035"/>
    </cofactor>
    <text evidence="1">Binds 2 manganese ions.</text>
</comment>
<comment type="pathway">
    <text evidence="1">Carbohydrate degradation; 2-deoxy-D-ribose 1-phosphate degradation; D-glyceraldehyde 3-phosphate and acetaldehyde from 2-deoxy-alpha-D-ribose 1-phosphate: step 1/2.</text>
</comment>
<comment type="subcellular location">
    <subcellularLocation>
        <location evidence="1">Cytoplasm</location>
    </subcellularLocation>
</comment>
<comment type="similarity">
    <text evidence="1">Belongs to the phosphopentomutase family.</text>
</comment>
<evidence type="ECO:0000255" key="1">
    <source>
        <dbReference type="HAMAP-Rule" id="MF_00740"/>
    </source>
</evidence>
<gene>
    <name evidence="1" type="primary">deoB</name>
    <name type="ordered locus">HPP12_1144</name>
</gene>
<organism>
    <name type="scientific">Helicobacter pylori (strain P12)</name>
    <dbReference type="NCBI Taxonomy" id="570508"/>
    <lineage>
        <taxon>Bacteria</taxon>
        <taxon>Pseudomonadati</taxon>
        <taxon>Campylobacterota</taxon>
        <taxon>Epsilonproteobacteria</taxon>
        <taxon>Campylobacterales</taxon>
        <taxon>Helicobacteraceae</taxon>
        <taxon>Helicobacter</taxon>
    </lineage>
</organism>
<name>DEOB_HELP2</name>
<dbReference type="EC" id="5.4.2.7" evidence="1"/>
<dbReference type="EMBL" id="CP001217">
    <property type="protein sequence ID" value="ACJ08296.1"/>
    <property type="molecule type" value="Genomic_DNA"/>
</dbReference>
<dbReference type="SMR" id="B6JN18"/>
<dbReference type="KEGG" id="hpp:HPP12_1144"/>
<dbReference type="HOGENOM" id="CLU_053861_0_0_7"/>
<dbReference type="UniPathway" id="UPA00002">
    <property type="reaction ID" value="UER00467"/>
</dbReference>
<dbReference type="Proteomes" id="UP000008198">
    <property type="component" value="Chromosome"/>
</dbReference>
<dbReference type="GO" id="GO:0005829">
    <property type="term" value="C:cytosol"/>
    <property type="evidence" value="ECO:0007669"/>
    <property type="project" value="TreeGrafter"/>
</dbReference>
<dbReference type="GO" id="GO:0000287">
    <property type="term" value="F:magnesium ion binding"/>
    <property type="evidence" value="ECO:0007669"/>
    <property type="project" value="InterPro"/>
</dbReference>
<dbReference type="GO" id="GO:0030145">
    <property type="term" value="F:manganese ion binding"/>
    <property type="evidence" value="ECO:0007669"/>
    <property type="project" value="UniProtKB-UniRule"/>
</dbReference>
<dbReference type="GO" id="GO:0008973">
    <property type="term" value="F:phosphopentomutase activity"/>
    <property type="evidence" value="ECO:0007669"/>
    <property type="project" value="UniProtKB-UniRule"/>
</dbReference>
<dbReference type="GO" id="GO:0006018">
    <property type="term" value="P:2-deoxyribose 1-phosphate catabolic process"/>
    <property type="evidence" value="ECO:0007669"/>
    <property type="project" value="UniProtKB-UniRule"/>
</dbReference>
<dbReference type="GO" id="GO:0006015">
    <property type="term" value="P:5-phosphoribose 1-diphosphate biosynthetic process"/>
    <property type="evidence" value="ECO:0007669"/>
    <property type="project" value="UniProtKB-UniPathway"/>
</dbReference>
<dbReference type="GO" id="GO:0043094">
    <property type="term" value="P:metabolic compound salvage"/>
    <property type="evidence" value="ECO:0007669"/>
    <property type="project" value="InterPro"/>
</dbReference>
<dbReference type="GO" id="GO:0009117">
    <property type="term" value="P:nucleotide metabolic process"/>
    <property type="evidence" value="ECO:0007669"/>
    <property type="project" value="InterPro"/>
</dbReference>
<dbReference type="CDD" id="cd16009">
    <property type="entry name" value="PPM"/>
    <property type="match status" value="1"/>
</dbReference>
<dbReference type="FunFam" id="3.30.70.1250:FF:000001">
    <property type="entry name" value="Phosphopentomutase"/>
    <property type="match status" value="1"/>
</dbReference>
<dbReference type="Gene3D" id="3.40.720.10">
    <property type="entry name" value="Alkaline Phosphatase, subunit A"/>
    <property type="match status" value="1"/>
</dbReference>
<dbReference type="Gene3D" id="3.30.70.1250">
    <property type="entry name" value="Phosphopentomutase"/>
    <property type="match status" value="1"/>
</dbReference>
<dbReference type="HAMAP" id="MF_00740">
    <property type="entry name" value="Phosphopentomut"/>
    <property type="match status" value="1"/>
</dbReference>
<dbReference type="InterPro" id="IPR017850">
    <property type="entry name" value="Alkaline_phosphatase_core_sf"/>
</dbReference>
<dbReference type="InterPro" id="IPR010045">
    <property type="entry name" value="DeoB"/>
</dbReference>
<dbReference type="InterPro" id="IPR006124">
    <property type="entry name" value="Metalloenzyme"/>
</dbReference>
<dbReference type="InterPro" id="IPR024052">
    <property type="entry name" value="Phosphopentomutase_DeoB_cap_sf"/>
</dbReference>
<dbReference type="NCBIfam" id="TIGR01696">
    <property type="entry name" value="deoB"/>
    <property type="match status" value="1"/>
</dbReference>
<dbReference type="NCBIfam" id="NF003766">
    <property type="entry name" value="PRK05362.1"/>
    <property type="match status" value="1"/>
</dbReference>
<dbReference type="PANTHER" id="PTHR21110">
    <property type="entry name" value="PHOSPHOPENTOMUTASE"/>
    <property type="match status" value="1"/>
</dbReference>
<dbReference type="PANTHER" id="PTHR21110:SF0">
    <property type="entry name" value="PHOSPHOPENTOMUTASE"/>
    <property type="match status" value="1"/>
</dbReference>
<dbReference type="Pfam" id="PF01676">
    <property type="entry name" value="Metalloenzyme"/>
    <property type="match status" value="1"/>
</dbReference>
<dbReference type="PIRSF" id="PIRSF001491">
    <property type="entry name" value="Ppentomutase"/>
    <property type="match status" value="1"/>
</dbReference>
<dbReference type="SUPFAM" id="SSF53649">
    <property type="entry name" value="Alkaline phosphatase-like"/>
    <property type="match status" value="1"/>
</dbReference>
<dbReference type="SUPFAM" id="SSF143856">
    <property type="entry name" value="DeoB insert domain-like"/>
    <property type="match status" value="1"/>
</dbReference>
<proteinExistence type="inferred from homology"/>
<sequence>MQKRVVILLLDSFGIGASEDAKDFGDLGANTLGNIAKACFNNLADSNDRSGALKLPYLEGLGLGLSALEAANELPLGFQPQPNLIGAYAYAQELSSAKDTISGHWEMMGAPVLFEWGYFKDKNDSFPKEILDEIARKTKIKGYLGNCHASGTEIIKDLGEKHLETLYPIFYTSADSVFQIAAHEEKFGLDNLYALCEEAFQILEPLKIARVIARPFIGTNRESFKRTANRKDYAIKPHKKLLFETFIEEKQGEVISIGKIADIYAHVGITQKFKAGSLMELCDVTLEQVKNAKNNSLIFTNFVHFDSDYGHRCDISGYANALEYFDTRLKEVLENLRENDLLILCADHGCDPSFKGTDHTREYIPVLFYHKDLQPAFLGKSDSFADIGQSIAYFLGLSPLDYGKNLLNFKGQP</sequence>
<accession>B6JN18</accession>
<feature type="chain" id="PRO_1000133080" description="Phosphopentomutase">
    <location>
        <begin position="1"/>
        <end position="413"/>
    </location>
</feature>
<feature type="binding site" evidence="1">
    <location>
        <position position="11"/>
    </location>
    <ligand>
        <name>Mn(2+)</name>
        <dbReference type="ChEBI" id="CHEBI:29035"/>
        <label>1</label>
    </ligand>
</feature>
<feature type="binding site" evidence="1">
    <location>
        <position position="306"/>
    </location>
    <ligand>
        <name>Mn(2+)</name>
        <dbReference type="ChEBI" id="CHEBI:29035"/>
        <label>2</label>
    </ligand>
</feature>
<feature type="binding site" evidence="1">
    <location>
        <position position="311"/>
    </location>
    <ligand>
        <name>Mn(2+)</name>
        <dbReference type="ChEBI" id="CHEBI:29035"/>
        <label>2</label>
    </ligand>
</feature>
<feature type="binding site" evidence="1">
    <location>
        <position position="347"/>
    </location>
    <ligand>
        <name>Mn(2+)</name>
        <dbReference type="ChEBI" id="CHEBI:29035"/>
        <label>1</label>
    </ligand>
</feature>
<feature type="binding site" evidence="1">
    <location>
        <position position="348"/>
    </location>
    <ligand>
        <name>Mn(2+)</name>
        <dbReference type="ChEBI" id="CHEBI:29035"/>
        <label>1</label>
    </ligand>
</feature>
<feature type="binding site" evidence="1">
    <location>
        <position position="359"/>
    </location>
    <ligand>
        <name>Mn(2+)</name>
        <dbReference type="ChEBI" id="CHEBI:29035"/>
        <label>2</label>
    </ligand>
</feature>
<reference key="1">
    <citation type="submission" date="2008-10" db="EMBL/GenBank/DDBJ databases">
        <title>The complete genome sequence of Helicobacter pylori strain P12.</title>
        <authorList>
            <person name="Fischer W."/>
            <person name="Windhager L."/>
            <person name="Karnholz A."/>
            <person name="Zeiller M."/>
            <person name="Zimmer R."/>
            <person name="Haas R."/>
        </authorList>
    </citation>
    <scope>NUCLEOTIDE SEQUENCE [LARGE SCALE GENOMIC DNA]</scope>
    <source>
        <strain>P12</strain>
    </source>
</reference>
<protein>
    <recommendedName>
        <fullName evidence="1">Phosphopentomutase</fullName>
        <ecNumber evidence="1">5.4.2.7</ecNumber>
    </recommendedName>
    <alternativeName>
        <fullName evidence="1">Phosphodeoxyribomutase</fullName>
    </alternativeName>
</protein>
<keyword id="KW-0963">Cytoplasm</keyword>
<keyword id="KW-0413">Isomerase</keyword>
<keyword id="KW-0464">Manganese</keyword>
<keyword id="KW-0479">Metal-binding</keyword>